<feature type="chain" id="PRO_0000089768" description="Citrate utilization protein B">
    <location>
        <begin position="1"/>
        <end position="379"/>
    </location>
</feature>
<feature type="binding site" evidence="1">
    <location>
        <position position="28"/>
    </location>
    <ligand>
        <name>[4Fe-4S] cluster</name>
        <dbReference type="ChEBI" id="CHEBI:49883"/>
        <label>1</label>
    </ligand>
</feature>
<feature type="binding site" evidence="1">
    <location>
        <position position="31"/>
    </location>
    <ligand>
        <name>[4Fe-4S] cluster</name>
        <dbReference type="ChEBI" id="CHEBI:49883"/>
        <label>1</label>
    </ligand>
</feature>
<feature type="binding site" evidence="1">
    <location>
        <position position="34"/>
    </location>
    <ligand>
        <name>[4Fe-4S] cluster</name>
        <dbReference type="ChEBI" id="CHEBI:49883"/>
        <label>1</label>
    </ligand>
</feature>
<feature type="binding site" evidence="1">
    <location>
        <position position="38"/>
    </location>
    <ligand>
        <name>[4Fe-4S] cluster</name>
        <dbReference type="ChEBI" id="CHEBI:49883"/>
        <label>2</label>
    </ligand>
</feature>
<feature type="binding site" evidence="1">
    <location>
        <position position="62"/>
    </location>
    <ligand>
        <name>[4Fe-4S] cluster</name>
        <dbReference type="ChEBI" id="CHEBI:49883"/>
        <label>2</label>
    </ligand>
</feature>
<feature type="binding site" evidence="1">
    <location>
        <position position="65"/>
    </location>
    <ligand>
        <name>[4Fe-4S] cluster</name>
        <dbReference type="ChEBI" id="CHEBI:49883"/>
        <label>2</label>
    </ligand>
</feature>
<feature type="binding site" evidence="1">
    <location>
        <position position="68"/>
    </location>
    <ligand>
        <name>[4Fe-4S] cluster</name>
        <dbReference type="ChEBI" id="CHEBI:49883"/>
        <label>2</label>
    </ligand>
</feature>
<feature type="binding site" evidence="1">
    <location>
        <position position="72"/>
    </location>
    <ligand>
        <name>[4Fe-4S] cluster</name>
        <dbReference type="ChEBI" id="CHEBI:49883"/>
        <label>1</label>
    </ligand>
</feature>
<feature type="sequence variant" description="In transposon Tn3411.">
    <original>L</original>
    <variation>M</variation>
    <location>
        <position position="134"/>
    </location>
</feature>
<feature type="sequence variant" description="In transposon Tn3411.">
    <original>P</original>
    <variation>H</variation>
    <location>
        <position position="184"/>
    </location>
</feature>
<feature type="sequence variant" description="In transposon Tn3411.">
    <original>S</original>
    <variation>P</variation>
    <location>
        <position position="291"/>
    </location>
</feature>
<feature type="sequence variant" description="In transposon Tn3411.">
    <original>A</original>
    <variation>S</variation>
    <location>
        <position position="377"/>
    </location>
</feature>
<evidence type="ECO:0000250" key="1"/>
<reference key="1">
    <citation type="journal article" date="1985" name="J. Bacteriol.">
        <title>Cloning and DNA sequence of a plasmid-determined citrate utilization system in Escherichia coli.</title>
        <authorList>
            <person name="Sasatsu M."/>
            <person name="Misra T.K."/>
            <person name="Chu L."/>
            <person name="Laddaga R."/>
            <person name="Silver S."/>
        </authorList>
    </citation>
    <scope>NUCLEOTIDE SEQUENCE [GENOMIC DNA]</scope>
    <source>
        <plasmid>pWR60</plasmid>
    </source>
</reference>
<reference key="2">
    <citation type="journal article" date="1988" name="Gene">
        <title>Promoters and transcription of the plasmid-mediated citrate-utilization system in Escherichia coli.</title>
        <authorList>
            <person name="Ishiguro N."/>
            <person name="Sasatsu M."/>
            <person name="Misra T.K."/>
            <person name="Silver S."/>
        </authorList>
    </citation>
    <scope>NUCLEOTIDE SEQUENCE [GENOMIC DNA]</scope>
    <source>
        <transposon>Tn3411</transposon>
    </source>
</reference>
<gene>
    <name type="primary">citB</name>
</gene>
<accession>P05853</accession>
<accession>Q56409</accession>
<name>CITB_ECOLX</name>
<organism>
    <name type="scientific">Escherichia coli</name>
    <dbReference type="NCBI Taxonomy" id="562"/>
    <lineage>
        <taxon>Bacteria</taxon>
        <taxon>Pseudomonadati</taxon>
        <taxon>Pseudomonadota</taxon>
        <taxon>Gammaproteobacteria</taxon>
        <taxon>Enterobacterales</taxon>
        <taxon>Enterobacteriaceae</taxon>
        <taxon>Escherichia</taxon>
    </lineage>
</organism>
<keyword id="KW-0004">4Fe-4S</keyword>
<keyword id="KW-0163">Citrate utilization</keyword>
<keyword id="KW-0408">Iron</keyword>
<keyword id="KW-0411">Iron-sulfur</keyword>
<keyword id="KW-0479">Metal-binding</keyword>
<keyword id="KW-0614">Plasmid</keyword>
<keyword id="KW-0814">Transposable element</keyword>
<geneLocation type="plasmid">
    <name>pWR60</name>
</geneLocation>
<proteinExistence type="predicted"/>
<sequence>MKQLEKLIIEAKILTEPEAEVERVMQVCNACRYCEGFCAVFPAMTQRLEFGKADINYLANLCHNCGACLHACQYAPPHEFAINVPKAMAEVRLETYQHYAQPAAFGALYRQAGVTVTLALVFSLILFLLLAMGLKGSLLHPPLAGDFYQIFPHNLLAWMFGSVFMLAIGLLMAGVIRFWREISPVGPRPAEIAEASHNALTLKYLDGGHGKGCNEADDAFTLMRRRFHHFTFYGFMLCFAATVVATGYHYFAGWEAPYPFFSVPVMLGTLGGIGLIVGPAGLLWLNLKRSSLHGDARQKPMDRGFILLLLLTSLTGIGLLAGRDTSWMGILLAIHLGVVMALFLTIPYGKFAHGFYRCASLLKWAIEKRRGKQAGVAGD</sequence>
<protein>
    <recommendedName>
        <fullName>Citrate utilization protein B</fullName>
    </recommendedName>
</protein>
<dbReference type="EMBL" id="M11559">
    <property type="protein sequence ID" value="AAA88471.1"/>
    <property type="molecule type" value="Genomic_DNA"/>
</dbReference>
<dbReference type="EMBL" id="M22041">
    <property type="protein sequence ID" value="AAA98397.1"/>
    <property type="molecule type" value="Genomic_DNA"/>
</dbReference>
<dbReference type="PIR" id="A23104">
    <property type="entry name" value="QQEC4W"/>
</dbReference>
<dbReference type="GO" id="GO:0051539">
    <property type="term" value="F:4 iron, 4 sulfur cluster binding"/>
    <property type="evidence" value="ECO:0007669"/>
    <property type="project" value="UniProtKB-KW"/>
</dbReference>
<dbReference type="GO" id="GO:0046872">
    <property type="term" value="F:metal ion binding"/>
    <property type="evidence" value="ECO:0007669"/>
    <property type="project" value="UniProtKB-KW"/>
</dbReference>
<dbReference type="GO" id="GO:0006101">
    <property type="term" value="P:citrate metabolic process"/>
    <property type="evidence" value="ECO:0007669"/>
    <property type="project" value="UniProtKB-KW"/>
</dbReference>
<dbReference type="InterPro" id="IPR012830">
    <property type="entry name" value="Citrate_utilization_prot_B"/>
</dbReference>
<dbReference type="InterPro" id="IPR036197">
    <property type="entry name" value="NarG-like_sf"/>
</dbReference>
<dbReference type="NCBIfam" id="TIGR02484">
    <property type="entry name" value="CitB"/>
    <property type="match status" value="1"/>
</dbReference>
<dbReference type="NCBIfam" id="NF011607">
    <property type="entry name" value="PRK15033.1"/>
    <property type="match status" value="1"/>
</dbReference>
<dbReference type="SUPFAM" id="SSF54862">
    <property type="entry name" value="4Fe-4S ferredoxins"/>
    <property type="match status" value="1"/>
</dbReference>
<dbReference type="SUPFAM" id="SSF103501">
    <property type="entry name" value="Respiratory nitrate reductase 1 gamma chain"/>
    <property type="match status" value="1"/>
</dbReference>